<dbReference type="EC" id="2.7.7.6" evidence="1"/>
<dbReference type="EMBL" id="AE017223">
    <property type="protein sequence ID" value="AAX74552.1"/>
    <property type="molecule type" value="Genomic_DNA"/>
</dbReference>
<dbReference type="RefSeq" id="WP_002964338.1">
    <property type="nucleotide sequence ID" value="NC_006932.1"/>
</dbReference>
<dbReference type="SMR" id="Q57CT2"/>
<dbReference type="EnsemblBacteria" id="AAX74552">
    <property type="protein sequence ID" value="AAX74552"/>
    <property type="gene ID" value="BruAb1_1214"/>
</dbReference>
<dbReference type="KEGG" id="bmb:BruAb1_1214"/>
<dbReference type="HOGENOM" id="CLU_053084_0_0_5"/>
<dbReference type="PRO" id="PR:Q57CT2"/>
<dbReference type="Proteomes" id="UP000000540">
    <property type="component" value="Chromosome I"/>
</dbReference>
<dbReference type="GO" id="GO:0005737">
    <property type="term" value="C:cytoplasm"/>
    <property type="evidence" value="ECO:0007669"/>
    <property type="project" value="UniProtKB-ARBA"/>
</dbReference>
<dbReference type="GO" id="GO:0000428">
    <property type="term" value="C:DNA-directed RNA polymerase complex"/>
    <property type="evidence" value="ECO:0007669"/>
    <property type="project" value="UniProtKB-KW"/>
</dbReference>
<dbReference type="GO" id="GO:0003677">
    <property type="term" value="F:DNA binding"/>
    <property type="evidence" value="ECO:0007669"/>
    <property type="project" value="UniProtKB-UniRule"/>
</dbReference>
<dbReference type="GO" id="GO:0003899">
    <property type="term" value="F:DNA-directed RNA polymerase activity"/>
    <property type="evidence" value="ECO:0007669"/>
    <property type="project" value="UniProtKB-UniRule"/>
</dbReference>
<dbReference type="GO" id="GO:0046983">
    <property type="term" value="F:protein dimerization activity"/>
    <property type="evidence" value="ECO:0007669"/>
    <property type="project" value="InterPro"/>
</dbReference>
<dbReference type="GO" id="GO:0006351">
    <property type="term" value="P:DNA-templated transcription"/>
    <property type="evidence" value="ECO:0007669"/>
    <property type="project" value="UniProtKB-UniRule"/>
</dbReference>
<dbReference type="CDD" id="cd06928">
    <property type="entry name" value="RNAP_alpha_NTD"/>
    <property type="match status" value="1"/>
</dbReference>
<dbReference type="FunFam" id="1.10.150.20:FF:000001">
    <property type="entry name" value="DNA-directed RNA polymerase subunit alpha"/>
    <property type="match status" value="1"/>
</dbReference>
<dbReference type="FunFam" id="2.170.120.12:FF:000001">
    <property type="entry name" value="DNA-directed RNA polymerase subunit alpha"/>
    <property type="match status" value="1"/>
</dbReference>
<dbReference type="Gene3D" id="1.10.150.20">
    <property type="entry name" value="5' to 3' exonuclease, C-terminal subdomain"/>
    <property type="match status" value="1"/>
</dbReference>
<dbReference type="Gene3D" id="2.170.120.12">
    <property type="entry name" value="DNA-directed RNA polymerase, insert domain"/>
    <property type="match status" value="1"/>
</dbReference>
<dbReference type="Gene3D" id="3.30.1360.10">
    <property type="entry name" value="RNA polymerase, RBP11-like subunit"/>
    <property type="match status" value="1"/>
</dbReference>
<dbReference type="HAMAP" id="MF_00059">
    <property type="entry name" value="RNApol_bact_RpoA"/>
    <property type="match status" value="1"/>
</dbReference>
<dbReference type="InterPro" id="IPR011262">
    <property type="entry name" value="DNA-dir_RNA_pol_insert"/>
</dbReference>
<dbReference type="InterPro" id="IPR011263">
    <property type="entry name" value="DNA-dir_RNA_pol_RpoA/D/Rpb3"/>
</dbReference>
<dbReference type="InterPro" id="IPR011773">
    <property type="entry name" value="DNA-dir_RpoA"/>
</dbReference>
<dbReference type="InterPro" id="IPR036603">
    <property type="entry name" value="RBP11-like"/>
</dbReference>
<dbReference type="InterPro" id="IPR011260">
    <property type="entry name" value="RNAP_asu_C"/>
</dbReference>
<dbReference type="InterPro" id="IPR036643">
    <property type="entry name" value="RNApol_insert_sf"/>
</dbReference>
<dbReference type="NCBIfam" id="NF003513">
    <property type="entry name" value="PRK05182.1-2"/>
    <property type="match status" value="1"/>
</dbReference>
<dbReference type="NCBIfam" id="NF003519">
    <property type="entry name" value="PRK05182.2-5"/>
    <property type="match status" value="1"/>
</dbReference>
<dbReference type="NCBIfam" id="TIGR02027">
    <property type="entry name" value="rpoA"/>
    <property type="match status" value="1"/>
</dbReference>
<dbReference type="Pfam" id="PF01000">
    <property type="entry name" value="RNA_pol_A_bac"/>
    <property type="match status" value="1"/>
</dbReference>
<dbReference type="Pfam" id="PF03118">
    <property type="entry name" value="RNA_pol_A_CTD"/>
    <property type="match status" value="1"/>
</dbReference>
<dbReference type="Pfam" id="PF01193">
    <property type="entry name" value="RNA_pol_L"/>
    <property type="match status" value="1"/>
</dbReference>
<dbReference type="SMART" id="SM00662">
    <property type="entry name" value="RPOLD"/>
    <property type="match status" value="1"/>
</dbReference>
<dbReference type="SUPFAM" id="SSF47789">
    <property type="entry name" value="C-terminal domain of RNA polymerase alpha subunit"/>
    <property type="match status" value="1"/>
</dbReference>
<dbReference type="SUPFAM" id="SSF56553">
    <property type="entry name" value="Insert subdomain of RNA polymerase alpha subunit"/>
    <property type="match status" value="1"/>
</dbReference>
<dbReference type="SUPFAM" id="SSF55257">
    <property type="entry name" value="RBP11-like subunits of RNA polymerase"/>
    <property type="match status" value="1"/>
</dbReference>
<proteinExistence type="inferred from homology"/>
<reference key="1">
    <citation type="journal article" date="2005" name="J. Bacteriol.">
        <title>Completion of the genome sequence of Brucella abortus and comparison to the highly similar genomes of Brucella melitensis and Brucella suis.</title>
        <authorList>
            <person name="Halling S.M."/>
            <person name="Peterson-Burch B.D."/>
            <person name="Bricker B.J."/>
            <person name="Zuerner R.L."/>
            <person name="Qing Z."/>
            <person name="Li L.-L."/>
            <person name="Kapur V."/>
            <person name="Alt D.P."/>
            <person name="Olsen S.C."/>
        </authorList>
    </citation>
    <scope>NUCLEOTIDE SEQUENCE [LARGE SCALE GENOMIC DNA]</scope>
    <source>
        <strain>9-941</strain>
    </source>
</reference>
<sequence length="337" mass="37385">MIQKNWQELIKPNKVDFITHGSRTHATVVAEPLERGFGLTLGNALRRVLLSSLRGAAVTAVQIDGVLHEFSSIPGVREDVTDIVLNIKEIAIRMEGEGPKRMVVRKEGPGVVTAGDIQTVGDVEILNPEHVICTLDEGAEIRMEFTVNTGKGYVPADRNRAEDAPIGLIPVDSLYSPVRKVSYKIENTREGQVLDYDKLTLNIETNGSVTGEDAVAYAARILQDQLSIFVNFEEPQKEAPQEQVAELAFNPALLKKVDELELSVRSANCLKNDNIVYIGDLIQKTEAEMLRTPNFGRKSLNEIKEVLASMGLHLGMEIPAWPPENIEDLAKRYEDQY</sequence>
<comment type="function">
    <text evidence="1">DNA-dependent RNA polymerase catalyzes the transcription of DNA into RNA using the four ribonucleoside triphosphates as substrates.</text>
</comment>
<comment type="catalytic activity">
    <reaction evidence="1">
        <text>RNA(n) + a ribonucleoside 5'-triphosphate = RNA(n+1) + diphosphate</text>
        <dbReference type="Rhea" id="RHEA:21248"/>
        <dbReference type="Rhea" id="RHEA-COMP:14527"/>
        <dbReference type="Rhea" id="RHEA-COMP:17342"/>
        <dbReference type="ChEBI" id="CHEBI:33019"/>
        <dbReference type="ChEBI" id="CHEBI:61557"/>
        <dbReference type="ChEBI" id="CHEBI:140395"/>
        <dbReference type="EC" id="2.7.7.6"/>
    </reaction>
</comment>
<comment type="subunit">
    <text evidence="1">Homodimer. The RNAP catalytic core consists of 2 alpha, 1 beta, 1 beta' and 1 omega subunit. When a sigma factor is associated with the core the holoenzyme is formed, which can initiate transcription.</text>
</comment>
<comment type="domain">
    <text evidence="1">The N-terminal domain is essential for RNAP assembly and basal transcription, whereas the C-terminal domain is involved in interaction with transcriptional regulators and with upstream promoter elements.</text>
</comment>
<comment type="similarity">
    <text evidence="1">Belongs to the RNA polymerase alpha chain family.</text>
</comment>
<feature type="chain" id="PRO_0000225260" description="DNA-directed RNA polymerase subunit alpha">
    <location>
        <begin position="1"/>
        <end position="337"/>
    </location>
</feature>
<feature type="region of interest" description="Alpha N-terminal domain (alpha-NTD)" evidence="1">
    <location>
        <begin position="1"/>
        <end position="233"/>
    </location>
</feature>
<feature type="region of interest" description="Alpha C-terminal domain (alpha-CTD)" evidence="1">
    <location>
        <begin position="249"/>
        <end position="337"/>
    </location>
</feature>
<keyword id="KW-0240">DNA-directed RNA polymerase</keyword>
<keyword id="KW-0548">Nucleotidyltransferase</keyword>
<keyword id="KW-0804">Transcription</keyword>
<keyword id="KW-0808">Transferase</keyword>
<protein>
    <recommendedName>
        <fullName evidence="1">DNA-directed RNA polymerase subunit alpha</fullName>
        <shortName evidence="1">RNAP subunit alpha</shortName>
        <ecNumber evidence="1">2.7.7.6</ecNumber>
    </recommendedName>
    <alternativeName>
        <fullName evidence="1">RNA polymerase subunit alpha</fullName>
    </alternativeName>
    <alternativeName>
        <fullName evidence="1">Transcriptase subunit alpha</fullName>
    </alternativeName>
</protein>
<name>RPOA_BRUAB</name>
<accession>Q57CT2</accession>
<organism>
    <name type="scientific">Brucella abortus biovar 1 (strain 9-941)</name>
    <dbReference type="NCBI Taxonomy" id="262698"/>
    <lineage>
        <taxon>Bacteria</taxon>
        <taxon>Pseudomonadati</taxon>
        <taxon>Pseudomonadota</taxon>
        <taxon>Alphaproteobacteria</taxon>
        <taxon>Hyphomicrobiales</taxon>
        <taxon>Brucellaceae</taxon>
        <taxon>Brucella/Ochrobactrum group</taxon>
        <taxon>Brucella</taxon>
    </lineage>
</organism>
<evidence type="ECO:0000255" key="1">
    <source>
        <dbReference type="HAMAP-Rule" id="MF_00059"/>
    </source>
</evidence>
<gene>
    <name evidence="1" type="primary">rpoA</name>
    <name type="ordered locus">BruAb1_1214</name>
</gene>